<gene>
    <name evidence="1" type="primary">leuA</name>
    <name type="ordered locus">SeHA_C0124</name>
</gene>
<reference key="1">
    <citation type="journal article" date="2011" name="J. Bacteriol.">
        <title>Comparative genomics of 28 Salmonella enterica isolates: evidence for CRISPR-mediated adaptive sublineage evolution.</title>
        <authorList>
            <person name="Fricke W.F."/>
            <person name="Mammel M.K."/>
            <person name="McDermott P.F."/>
            <person name="Tartera C."/>
            <person name="White D.G."/>
            <person name="Leclerc J.E."/>
            <person name="Ravel J."/>
            <person name="Cebula T.A."/>
        </authorList>
    </citation>
    <scope>NUCLEOTIDE SEQUENCE [LARGE SCALE GENOMIC DNA]</scope>
    <source>
        <strain>SL476</strain>
    </source>
</reference>
<accession>B4TJ72</accession>
<keyword id="KW-0028">Amino-acid biosynthesis</keyword>
<keyword id="KW-0100">Branched-chain amino acid biosynthesis</keyword>
<keyword id="KW-0963">Cytoplasm</keyword>
<keyword id="KW-0432">Leucine biosynthesis</keyword>
<keyword id="KW-0464">Manganese</keyword>
<keyword id="KW-0479">Metal-binding</keyword>
<keyword id="KW-0808">Transferase</keyword>
<name>LEU1_SALHS</name>
<protein>
    <recommendedName>
        <fullName evidence="1">2-isopropylmalate synthase</fullName>
        <ecNumber evidence="1">2.3.3.13</ecNumber>
    </recommendedName>
    <alternativeName>
        <fullName evidence="1">Alpha-IPM synthase</fullName>
    </alternativeName>
    <alternativeName>
        <fullName evidence="1">Alpha-isopropylmalate synthase</fullName>
    </alternativeName>
</protein>
<proteinExistence type="inferred from homology"/>
<organism>
    <name type="scientific">Salmonella heidelberg (strain SL476)</name>
    <dbReference type="NCBI Taxonomy" id="454169"/>
    <lineage>
        <taxon>Bacteria</taxon>
        <taxon>Pseudomonadati</taxon>
        <taxon>Pseudomonadota</taxon>
        <taxon>Gammaproteobacteria</taxon>
        <taxon>Enterobacterales</taxon>
        <taxon>Enterobacteriaceae</taxon>
        <taxon>Salmonella</taxon>
    </lineage>
</organism>
<dbReference type="EC" id="2.3.3.13" evidence="1"/>
<dbReference type="EMBL" id="CP001120">
    <property type="protein sequence ID" value="ACF66296.1"/>
    <property type="molecule type" value="Genomic_DNA"/>
</dbReference>
<dbReference type="RefSeq" id="WP_000082819.1">
    <property type="nucleotide sequence ID" value="NC_011083.1"/>
</dbReference>
<dbReference type="SMR" id="B4TJ72"/>
<dbReference type="KEGG" id="seh:SeHA_C0124"/>
<dbReference type="HOGENOM" id="CLU_022158_0_1_6"/>
<dbReference type="UniPathway" id="UPA00048">
    <property type="reaction ID" value="UER00070"/>
</dbReference>
<dbReference type="Proteomes" id="UP000001866">
    <property type="component" value="Chromosome"/>
</dbReference>
<dbReference type="GO" id="GO:0005829">
    <property type="term" value="C:cytosol"/>
    <property type="evidence" value="ECO:0007669"/>
    <property type="project" value="TreeGrafter"/>
</dbReference>
<dbReference type="GO" id="GO:0003852">
    <property type="term" value="F:2-isopropylmalate synthase activity"/>
    <property type="evidence" value="ECO:0007669"/>
    <property type="project" value="UniProtKB-UniRule"/>
</dbReference>
<dbReference type="GO" id="GO:0003985">
    <property type="term" value="F:acetyl-CoA C-acetyltransferase activity"/>
    <property type="evidence" value="ECO:0007669"/>
    <property type="project" value="UniProtKB-UniRule"/>
</dbReference>
<dbReference type="GO" id="GO:0030145">
    <property type="term" value="F:manganese ion binding"/>
    <property type="evidence" value="ECO:0007669"/>
    <property type="project" value="UniProtKB-UniRule"/>
</dbReference>
<dbReference type="GO" id="GO:0009098">
    <property type="term" value="P:L-leucine biosynthetic process"/>
    <property type="evidence" value="ECO:0007669"/>
    <property type="project" value="UniProtKB-UniRule"/>
</dbReference>
<dbReference type="CDD" id="cd07940">
    <property type="entry name" value="DRE_TIM_IPMS"/>
    <property type="match status" value="1"/>
</dbReference>
<dbReference type="FunFam" id="1.10.238.260:FF:000001">
    <property type="entry name" value="2-isopropylmalate synthase"/>
    <property type="match status" value="1"/>
</dbReference>
<dbReference type="FunFam" id="3.20.20.70:FF:000010">
    <property type="entry name" value="2-isopropylmalate synthase"/>
    <property type="match status" value="1"/>
</dbReference>
<dbReference type="FunFam" id="3.30.160.270:FF:000001">
    <property type="entry name" value="2-isopropylmalate synthase"/>
    <property type="match status" value="1"/>
</dbReference>
<dbReference type="Gene3D" id="1.10.238.260">
    <property type="match status" value="1"/>
</dbReference>
<dbReference type="Gene3D" id="3.30.160.270">
    <property type="match status" value="1"/>
</dbReference>
<dbReference type="Gene3D" id="3.20.20.70">
    <property type="entry name" value="Aldolase class I"/>
    <property type="match status" value="1"/>
</dbReference>
<dbReference type="HAMAP" id="MF_01025">
    <property type="entry name" value="LeuA_type1"/>
    <property type="match status" value="1"/>
</dbReference>
<dbReference type="InterPro" id="IPR050073">
    <property type="entry name" value="2-IPM_HCS-like"/>
</dbReference>
<dbReference type="InterPro" id="IPR013709">
    <property type="entry name" value="2-isopropylmalate_synth_dimer"/>
</dbReference>
<dbReference type="InterPro" id="IPR002034">
    <property type="entry name" value="AIPM/Hcit_synth_CS"/>
</dbReference>
<dbReference type="InterPro" id="IPR013785">
    <property type="entry name" value="Aldolase_TIM"/>
</dbReference>
<dbReference type="InterPro" id="IPR054691">
    <property type="entry name" value="LeuA/HCS_post-cat"/>
</dbReference>
<dbReference type="InterPro" id="IPR036230">
    <property type="entry name" value="LeuA_allosteric_dom_sf"/>
</dbReference>
<dbReference type="InterPro" id="IPR005671">
    <property type="entry name" value="LeuA_bact_synth"/>
</dbReference>
<dbReference type="InterPro" id="IPR000891">
    <property type="entry name" value="PYR_CT"/>
</dbReference>
<dbReference type="NCBIfam" id="TIGR00973">
    <property type="entry name" value="leuA_bact"/>
    <property type="match status" value="1"/>
</dbReference>
<dbReference type="NCBIfam" id="NF002084">
    <property type="entry name" value="PRK00915.1-1"/>
    <property type="match status" value="1"/>
</dbReference>
<dbReference type="NCBIfam" id="NF002086">
    <property type="entry name" value="PRK00915.1-3"/>
    <property type="match status" value="1"/>
</dbReference>
<dbReference type="PANTHER" id="PTHR10277:SF9">
    <property type="entry name" value="2-ISOPROPYLMALATE SYNTHASE 1, CHLOROPLASTIC-RELATED"/>
    <property type="match status" value="1"/>
</dbReference>
<dbReference type="PANTHER" id="PTHR10277">
    <property type="entry name" value="HOMOCITRATE SYNTHASE-RELATED"/>
    <property type="match status" value="1"/>
</dbReference>
<dbReference type="Pfam" id="PF22617">
    <property type="entry name" value="HCS_D2"/>
    <property type="match status" value="1"/>
</dbReference>
<dbReference type="Pfam" id="PF00682">
    <property type="entry name" value="HMGL-like"/>
    <property type="match status" value="1"/>
</dbReference>
<dbReference type="Pfam" id="PF08502">
    <property type="entry name" value="LeuA_dimer"/>
    <property type="match status" value="1"/>
</dbReference>
<dbReference type="SMART" id="SM00917">
    <property type="entry name" value="LeuA_dimer"/>
    <property type="match status" value="1"/>
</dbReference>
<dbReference type="SUPFAM" id="SSF110921">
    <property type="entry name" value="2-isopropylmalate synthase LeuA, allosteric (dimerisation) domain"/>
    <property type="match status" value="1"/>
</dbReference>
<dbReference type="SUPFAM" id="SSF51569">
    <property type="entry name" value="Aldolase"/>
    <property type="match status" value="1"/>
</dbReference>
<dbReference type="PROSITE" id="PS00815">
    <property type="entry name" value="AIPM_HOMOCIT_SYNTH_1"/>
    <property type="match status" value="1"/>
</dbReference>
<dbReference type="PROSITE" id="PS00816">
    <property type="entry name" value="AIPM_HOMOCIT_SYNTH_2"/>
    <property type="match status" value="1"/>
</dbReference>
<dbReference type="PROSITE" id="PS50991">
    <property type="entry name" value="PYR_CT"/>
    <property type="match status" value="1"/>
</dbReference>
<sequence length="523" mass="57431">MSQQVIIFDTTLRDGEQALQASLSAKEKLQIALALERMGVDVMEVGFPVSSPGDFESVQTIARTIKNSRVCALARCVEKDIDVAAQALKVADAFRIHTFIATSPMHIATKLRSTLDEVIERAVYMVKRARNYTDDVEFSCEDAGRTPVDDLARVVEAAINAGARTINIPDTVGYTMPFEFAGIISGLYERVPNIDKAIISVHTHDDLGIAVGNSLAAVHAGARQVEGAMNGIGERAGNCALEEVIMAIKVRKDIMNVHTNINHHEIWRTSQTVSQICNMPIPANKAIVGSGAFAHSSGIHQDGVLKNRENYEIMTPESIGLNQIQLNLTSRSGRAAVKHRMEEMGYKDTDYNMDHLYDAFLKLADKKGQVFDYDLEALAFINKQQEEPEHFRLDYFSVQSGSSDIATASVKLACGEEIKAEAANGNGPVDAIYQAINRITGYDVELVKYDLNAKGQGKDALGQVDIVVNHHGRRFHGVGLATDIVESSAKAMVHVLNNIWRAAEVEKELQRKAQNKENNKETV</sequence>
<feature type="chain" id="PRO_1000149269" description="2-isopropylmalate synthase">
    <location>
        <begin position="1"/>
        <end position="523"/>
    </location>
</feature>
<feature type="domain" description="Pyruvate carboxyltransferase" evidence="1">
    <location>
        <begin position="5"/>
        <end position="267"/>
    </location>
</feature>
<feature type="region of interest" description="Regulatory domain" evidence="1">
    <location>
        <begin position="392"/>
        <end position="523"/>
    </location>
</feature>
<feature type="binding site" evidence="1">
    <location>
        <position position="14"/>
    </location>
    <ligand>
        <name>Mn(2+)</name>
        <dbReference type="ChEBI" id="CHEBI:29035"/>
    </ligand>
</feature>
<feature type="binding site" evidence="1">
    <location>
        <position position="202"/>
    </location>
    <ligand>
        <name>Mn(2+)</name>
        <dbReference type="ChEBI" id="CHEBI:29035"/>
    </ligand>
</feature>
<feature type="binding site" evidence="1">
    <location>
        <position position="204"/>
    </location>
    <ligand>
        <name>Mn(2+)</name>
        <dbReference type="ChEBI" id="CHEBI:29035"/>
    </ligand>
</feature>
<feature type="binding site" evidence="1">
    <location>
        <position position="238"/>
    </location>
    <ligand>
        <name>Mn(2+)</name>
        <dbReference type="ChEBI" id="CHEBI:29035"/>
    </ligand>
</feature>
<evidence type="ECO:0000255" key="1">
    <source>
        <dbReference type="HAMAP-Rule" id="MF_01025"/>
    </source>
</evidence>
<comment type="function">
    <text evidence="1">Catalyzes the condensation of the acetyl group of acetyl-CoA with 3-methyl-2-oxobutanoate (2-ketoisovalerate) to form 3-carboxy-3-hydroxy-4-methylpentanoate (2-isopropylmalate).</text>
</comment>
<comment type="catalytic activity">
    <reaction evidence="1">
        <text>3-methyl-2-oxobutanoate + acetyl-CoA + H2O = (2S)-2-isopropylmalate + CoA + H(+)</text>
        <dbReference type="Rhea" id="RHEA:21524"/>
        <dbReference type="ChEBI" id="CHEBI:1178"/>
        <dbReference type="ChEBI" id="CHEBI:11851"/>
        <dbReference type="ChEBI" id="CHEBI:15377"/>
        <dbReference type="ChEBI" id="CHEBI:15378"/>
        <dbReference type="ChEBI" id="CHEBI:57287"/>
        <dbReference type="ChEBI" id="CHEBI:57288"/>
        <dbReference type="EC" id="2.3.3.13"/>
    </reaction>
</comment>
<comment type="cofactor">
    <cofactor evidence="1">
        <name>Mn(2+)</name>
        <dbReference type="ChEBI" id="CHEBI:29035"/>
    </cofactor>
</comment>
<comment type="pathway">
    <text evidence="1">Amino-acid biosynthesis; L-leucine biosynthesis; L-leucine from 3-methyl-2-oxobutanoate: step 1/4.</text>
</comment>
<comment type="subunit">
    <text evidence="1">Homodimer.</text>
</comment>
<comment type="subcellular location">
    <subcellularLocation>
        <location evidence="1">Cytoplasm</location>
    </subcellularLocation>
</comment>
<comment type="similarity">
    <text evidence="1">Belongs to the alpha-IPM synthase/homocitrate synthase family. LeuA type 1 subfamily.</text>
</comment>